<gene>
    <name evidence="1" type="primary">hscA</name>
    <name type="ordered locus">Mpe_A2258</name>
</gene>
<proteinExistence type="inferred from homology"/>
<evidence type="ECO:0000255" key="1">
    <source>
        <dbReference type="HAMAP-Rule" id="MF_00679"/>
    </source>
</evidence>
<dbReference type="EMBL" id="CP000555">
    <property type="protein sequence ID" value="ABM95214.1"/>
    <property type="molecule type" value="Genomic_DNA"/>
</dbReference>
<dbReference type="RefSeq" id="WP_011829851.1">
    <property type="nucleotide sequence ID" value="NC_008825.1"/>
</dbReference>
<dbReference type="SMR" id="A2SI25"/>
<dbReference type="STRING" id="420662.Mpe_A2258"/>
<dbReference type="KEGG" id="mpt:Mpe_A2258"/>
<dbReference type="eggNOG" id="COG0443">
    <property type="taxonomic scope" value="Bacteria"/>
</dbReference>
<dbReference type="HOGENOM" id="CLU_005965_2_1_4"/>
<dbReference type="Proteomes" id="UP000000366">
    <property type="component" value="Chromosome"/>
</dbReference>
<dbReference type="GO" id="GO:0005524">
    <property type="term" value="F:ATP binding"/>
    <property type="evidence" value="ECO:0007669"/>
    <property type="project" value="UniProtKB-KW"/>
</dbReference>
<dbReference type="GO" id="GO:0016887">
    <property type="term" value="F:ATP hydrolysis activity"/>
    <property type="evidence" value="ECO:0007669"/>
    <property type="project" value="UniProtKB-UniRule"/>
</dbReference>
<dbReference type="GO" id="GO:0140662">
    <property type="term" value="F:ATP-dependent protein folding chaperone"/>
    <property type="evidence" value="ECO:0007669"/>
    <property type="project" value="InterPro"/>
</dbReference>
<dbReference type="GO" id="GO:0051082">
    <property type="term" value="F:unfolded protein binding"/>
    <property type="evidence" value="ECO:0007669"/>
    <property type="project" value="InterPro"/>
</dbReference>
<dbReference type="GO" id="GO:0016226">
    <property type="term" value="P:iron-sulfur cluster assembly"/>
    <property type="evidence" value="ECO:0007669"/>
    <property type="project" value="InterPro"/>
</dbReference>
<dbReference type="FunFam" id="3.30.420.40:FF:000046">
    <property type="entry name" value="Chaperone protein HscA"/>
    <property type="match status" value="1"/>
</dbReference>
<dbReference type="FunFam" id="2.60.34.10:FF:000005">
    <property type="entry name" value="Chaperone protein HscA homolog"/>
    <property type="match status" value="1"/>
</dbReference>
<dbReference type="Gene3D" id="1.20.1270.10">
    <property type="match status" value="1"/>
</dbReference>
<dbReference type="Gene3D" id="3.30.420.40">
    <property type="match status" value="2"/>
</dbReference>
<dbReference type="Gene3D" id="3.90.640.10">
    <property type="entry name" value="Actin, Chain A, domain 4"/>
    <property type="match status" value="1"/>
</dbReference>
<dbReference type="Gene3D" id="2.60.34.10">
    <property type="entry name" value="Substrate Binding Domain Of DNAk, Chain A, domain 1"/>
    <property type="match status" value="1"/>
</dbReference>
<dbReference type="HAMAP" id="MF_00679">
    <property type="entry name" value="HscA"/>
    <property type="match status" value="1"/>
</dbReference>
<dbReference type="InterPro" id="IPR043129">
    <property type="entry name" value="ATPase_NBD"/>
</dbReference>
<dbReference type="InterPro" id="IPR018181">
    <property type="entry name" value="Heat_shock_70_CS"/>
</dbReference>
<dbReference type="InterPro" id="IPR029048">
    <property type="entry name" value="HSP70_C_sf"/>
</dbReference>
<dbReference type="InterPro" id="IPR029047">
    <property type="entry name" value="HSP70_peptide-bd_sf"/>
</dbReference>
<dbReference type="InterPro" id="IPR013126">
    <property type="entry name" value="Hsp_70_fam"/>
</dbReference>
<dbReference type="InterPro" id="IPR010236">
    <property type="entry name" value="ISC_FeS_clus_asmbl_HscA"/>
</dbReference>
<dbReference type="NCBIfam" id="TIGR01991">
    <property type="entry name" value="HscA"/>
    <property type="match status" value="1"/>
</dbReference>
<dbReference type="NCBIfam" id="NF003520">
    <property type="entry name" value="PRK05183.1"/>
    <property type="match status" value="1"/>
</dbReference>
<dbReference type="PANTHER" id="PTHR19375">
    <property type="entry name" value="HEAT SHOCK PROTEIN 70KDA"/>
    <property type="match status" value="1"/>
</dbReference>
<dbReference type="Pfam" id="PF00012">
    <property type="entry name" value="HSP70"/>
    <property type="match status" value="1"/>
</dbReference>
<dbReference type="PRINTS" id="PR00301">
    <property type="entry name" value="HEATSHOCK70"/>
</dbReference>
<dbReference type="SUPFAM" id="SSF53067">
    <property type="entry name" value="Actin-like ATPase domain"/>
    <property type="match status" value="2"/>
</dbReference>
<dbReference type="SUPFAM" id="SSF100934">
    <property type="entry name" value="Heat shock protein 70kD (HSP70), C-terminal subdomain"/>
    <property type="match status" value="1"/>
</dbReference>
<dbReference type="SUPFAM" id="SSF100920">
    <property type="entry name" value="Heat shock protein 70kD (HSP70), peptide-binding domain"/>
    <property type="match status" value="1"/>
</dbReference>
<dbReference type="PROSITE" id="PS00297">
    <property type="entry name" value="HSP70_1"/>
    <property type="match status" value="1"/>
</dbReference>
<dbReference type="PROSITE" id="PS00329">
    <property type="entry name" value="HSP70_2"/>
    <property type="match status" value="1"/>
</dbReference>
<dbReference type="PROSITE" id="PS01036">
    <property type="entry name" value="HSP70_3"/>
    <property type="match status" value="1"/>
</dbReference>
<protein>
    <recommendedName>
        <fullName evidence="1">Chaperone protein HscA homolog</fullName>
    </recommendedName>
</protein>
<comment type="function">
    <text evidence="1">Chaperone involved in the maturation of iron-sulfur cluster-containing proteins. Has a low intrinsic ATPase activity which is markedly stimulated by HscB.</text>
</comment>
<comment type="similarity">
    <text evidence="1">Belongs to the heat shock protein 70 family.</text>
</comment>
<keyword id="KW-0067">ATP-binding</keyword>
<keyword id="KW-0143">Chaperone</keyword>
<keyword id="KW-0547">Nucleotide-binding</keyword>
<keyword id="KW-1185">Reference proteome</keyword>
<sequence>MALLQISEPGQSPDPHQRRIAVGIDLGTTHSLVAAVRSGVAECLPDDEGRVILPSAVRYLEGGRRAIGFDALAAQAEDPENTIVSAKRFMGRTLTDIDDREKLPYRFVDQPGMVSVATRDGVKTPVEVSAELLATLRFRAEDSFDDELFGAVITVPAYFDDAQRQATKDAAQLAGLNVLRLINEPTAAAIAYGLENGSEGLYAVYDLGGGTFDISLLRLSEGVFEVVATGGDSALGGDDYDHALADWALAGAGLAAETAQDKRAVLVAARAVKEALSSAAEARMQVVLRAGLLDLAVTRVQFEALTKPLTDRTLAAVRKVLRDAKVSKDEVKGVVLVGGSTRMPQIREAVTLYLGRSPLTDLNPDEVVALGAAIQAHQLAGNASGNDLLLLDVTPLSLGLETMGGLVERIIPRNSSIPTARAQDFTTFKDGQTAMAIHVLQGEREQVEYCRSLARFELRGIPPMVAGAARIRVSFQVDADGLLSVTAREQTSGVEAAVTVKPSYGLADEQIARMLQEGFTTAEGDMRDRALREARVETERMVLATRAALAADGDLLADGERAGIEALMRAAEQQALGEDAAAIDAAVKALADGTESFAAERMNRGIRQALAGRRVEEV</sequence>
<organism>
    <name type="scientific">Methylibium petroleiphilum (strain ATCC BAA-1232 / LMG 22953 / PM1)</name>
    <dbReference type="NCBI Taxonomy" id="420662"/>
    <lineage>
        <taxon>Bacteria</taxon>
        <taxon>Pseudomonadati</taxon>
        <taxon>Pseudomonadota</taxon>
        <taxon>Betaproteobacteria</taxon>
        <taxon>Burkholderiales</taxon>
        <taxon>Sphaerotilaceae</taxon>
        <taxon>Methylibium</taxon>
    </lineage>
</organism>
<reference key="1">
    <citation type="journal article" date="2007" name="J. Bacteriol.">
        <title>Whole-genome analysis of the methyl tert-butyl ether-degrading beta-proteobacterium Methylibium petroleiphilum PM1.</title>
        <authorList>
            <person name="Kane S.R."/>
            <person name="Chakicherla A.Y."/>
            <person name="Chain P.S.G."/>
            <person name="Schmidt R."/>
            <person name="Shin M.W."/>
            <person name="Legler T.C."/>
            <person name="Scow K.M."/>
            <person name="Larimer F.W."/>
            <person name="Lucas S.M."/>
            <person name="Richardson P.M."/>
            <person name="Hristova K.R."/>
        </authorList>
    </citation>
    <scope>NUCLEOTIDE SEQUENCE [LARGE SCALE GENOMIC DNA]</scope>
    <source>
        <strain>ATCC BAA-1232 / LMG 22953 / PM1</strain>
    </source>
</reference>
<feature type="chain" id="PRO_1000044866" description="Chaperone protein HscA homolog">
    <location>
        <begin position="1"/>
        <end position="618"/>
    </location>
</feature>
<accession>A2SI25</accession>
<name>HSCA_METPP</name>